<proteinExistence type="inferred from homology"/>
<accession>Q06SG0</accession>
<sequence>MINDTISDMLTRIRNASIVRKKSVLIPYTKMNLKIAEILEKEGYILSFEINTNKAISITKKTSETNLRMLKIYLKYYKKYKTNFYKLNVIKNKKALSDFKNLIKLLKGKQGNKKTPCITNLKRISKPGLRIYVNHKELPRVLAGTGIYILSTSKGILTDREARFRGIGGEVLCSVW</sequence>
<gene>
    <name type="primary">rps8</name>
</gene>
<name>RR8_STIHE</name>
<protein>
    <recommendedName>
        <fullName evidence="2">Small ribosomal subunit protein uS8c</fullName>
    </recommendedName>
    <alternativeName>
        <fullName>30S ribosomal protein S8, chloroplastic</fullName>
    </alternativeName>
</protein>
<geneLocation type="chloroplast"/>
<keyword id="KW-0150">Chloroplast</keyword>
<keyword id="KW-0934">Plastid</keyword>
<keyword id="KW-0687">Ribonucleoprotein</keyword>
<keyword id="KW-0689">Ribosomal protein</keyword>
<keyword id="KW-0694">RNA-binding</keyword>
<keyword id="KW-0699">rRNA-binding</keyword>
<reference key="1">
    <citation type="journal article" date="2006" name="Mol. Genet. Genomics">
        <title>Distinctive architecture of the chloroplast genome in the chlorophycean green alga Stigeoclonium helveticum.</title>
        <authorList>
            <person name="Belanger A.-S."/>
            <person name="Brouard J.-S."/>
            <person name="Charlebois P."/>
            <person name="Otis C."/>
            <person name="Lemieux C."/>
            <person name="Turmel M."/>
        </authorList>
    </citation>
    <scope>NUCLEOTIDE SEQUENCE [LARGE SCALE GENOMIC DNA]</scope>
    <source>
        <strain>UTEX 441</strain>
    </source>
</reference>
<evidence type="ECO:0000250" key="1"/>
<evidence type="ECO:0000305" key="2"/>
<organism>
    <name type="scientific">Stigeoclonium helveticum</name>
    <name type="common">Green alga</name>
    <dbReference type="NCBI Taxonomy" id="55999"/>
    <lineage>
        <taxon>Eukaryota</taxon>
        <taxon>Viridiplantae</taxon>
        <taxon>Chlorophyta</taxon>
        <taxon>core chlorophytes</taxon>
        <taxon>Chlorophyceae</taxon>
        <taxon>OCC clade</taxon>
        <taxon>Chaetophorales</taxon>
        <taxon>Chaetophoraceae</taxon>
        <taxon>Stigeoclonium</taxon>
    </lineage>
</organism>
<comment type="function">
    <text evidence="1">One of the primary rRNA binding proteins, it binds directly to 16S rRNA central domain where it helps coordinate assembly of the platform of the 30S subunit.</text>
</comment>
<comment type="subunit">
    <text evidence="1">Part of the 30S ribosomal subunit.</text>
</comment>
<comment type="subcellular location">
    <subcellularLocation>
        <location>Plastid</location>
        <location>Chloroplast</location>
    </subcellularLocation>
</comment>
<comment type="similarity">
    <text evidence="2">Belongs to the universal ribosomal protein uS8 family.</text>
</comment>
<dbReference type="EMBL" id="DQ630521">
    <property type="protein sequence ID" value="ABF60200.1"/>
    <property type="molecule type" value="Genomic_DNA"/>
</dbReference>
<dbReference type="RefSeq" id="YP_764406.1">
    <property type="nucleotide sequence ID" value="NC_008372.1"/>
</dbReference>
<dbReference type="SMR" id="Q06SG0"/>
<dbReference type="GeneID" id="4308431"/>
<dbReference type="GO" id="GO:0009507">
    <property type="term" value="C:chloroplast"/>
    <property type="evidence" value="ECO:0007669"/>
    <property type="project" value="UniProtKB-SubCell"/>
</dbReference>
<dbReference type="GO" id="GO:1990904">
    <property type="term" value="C:ribonucleoprotein complex"/>
    <property type="evidence" value="ECO:0007669"/>
    <property type="project" value="UniProtKB-KW"/>
</dbReference>
<dbReference type="GO" id="GO:0005840">
    <property type="term" value="C:ribosome"/>
    <property type="evidence" value="ECO:0007669"/>
    <property type="project" value="UniProtKB-KW"/>
</dbReference>
<dbReference type="GO" id="GO:0019843">
    <property type="term" value="F:rRNA binding"/>
    <property type="evidence" value="ECO:0007669"/>
    <property type="project" value="UniProtKB-UniRule"/>
</dbReference>
<dbReference type="GO" id="GO:0003735">
    <property type="term" value="F:structural constituent of ribosome"/>
    <property type="evidence" value="ECO:0007669"/>
    <property type="project" value="InterPro"/>
</dbReference>
<dbReference type="GO" id="GO:0006412">
    <property type="term" value="P:translation"/>
    <property type="evidence" value="ECO:0007669"/>
    <property type="project" value="UniProtKB-UniRule"/>
</dbReference>
<dbReference type="FunFam" id="3.30.1490.10:FF:000001">
    <property type="entry name" value="30S ribosomal protein S8"/>
    <property type="match status" value="1"/>
</dbReference>
<dbReference type="Gene3D" id="3.30.1370.30">
    <property type="match status" value="1"/>
</dbReference>
<dbReference type="Gene3D" id="3.30.1490.10">
    <property type="match status" value="1"/>
</dbReference>
<dbReference type="HAMAP" id="MF_01302_B">
    <property type="entry name" value="Ribosomal_uS8_B"/>
    <property type="match status" value="1"/>
</dbReference>
<dbReference type="InterPro" id="IPR000630">
    <property type="entry name" value="Ribosomal_uS8"/>
</dbReference>
<dbReference type="InterPro" id="IPR047863">
    <property type="entry name" value="Ribosomal_uS8_CS"/>
</dbReference>
<dbReference type="InterPro" id="IPR035987">
    <property type="entry name" value="Ribosomal_uS8_sf"/>
</dbReference>
<dbReference type="PANTHER" id="PTHR11758">
    <property type="entry name" value="40S RIBOSOMAL PROTEIN S15A"/>
    <property type="match status" value="1"/>
</dbReference>
<dbReference type="Pfam" id="PF00410">
    <property type="entry name" value="Ribosomal_S8"/>
    <property type="match status" value="2"/>
</dbReference>
<dbReference type="SUPFAM" id="SSF56047">
    <property type="entry name" value="Ribosomal protein S8"/>
    <property type="match status" value="1"/>
</dbReference>
<dbReference type="PROSITE" id="PS00053">
    <property type="entry name" value="RIBOSOMAL_S8"/>
    <property type="match status" value="1"/>
</dbReference>
<feature type="chain" id="PRO_0000276733" description="Small ribosomal subunit protein uS8c">
    <location>
        <begin position="1"/>
        <end position="176"/>
    </location>
</feature>